<comment type="function">
    <text evidence="6">Required for assembling actin at ring canals in developing egg chambers. Probably interacts with other developmental proteins involved in nurse cell/oocyte transport through the ring canals. Important for normal neuromotor function (PubMed:23836506).</text>
</comment>
<comment type="subcellular location">
    <subcellularLocation>
        <location evidence="1">Cytoplasm</location>
        <location evidence="1">Cytoskeleton</location>
    </subcellularLocation>
    <subcellularLocation>
        <location evidence="1">Cell membrane</location>
        <topology evidence="1">Peripheral membrane protein</topology>
        <orientation evidence="1">Cytoplasmic side</orientation>
    </subcellularLocation>
</comment>
<comment type="alternative products">
    <event type="alternative splicing"/>
    <isoform>
        <id>Q02645-1</id>
        <name>A</name>
        <name>K</name>
        <name>N</name>
        <name>N4</name>
        <sequence type="displayed"/>
    </isoform>
    <isoform>
        <id>Q02645-2</id>
        <name>B</name>
        <name>I</name>
        <name>L</name>
        <name>M</name>
        <name>R1</name>
        <sequence type="described" ref="VSP_000191 VSP_000192"/>
    </isoform>
    <isoform>
        <id>Q02645-3</id>
        <name>C</name>
        <name>H</name>
        <name>J</name>
        <name>N32</name>
        <name>R2</name>
        <sequence type="described" ref="VSP_009199 VSP_009200"/>
    </isoform>
    <isoform>
        <id>Q02645-4</id>
        <name>D</name>
        <sequence type="described" ref="VSP_042122 VSP_042123"/>
    </isoform>
</comment>
<comment type="tissue specificity">
    <text evidence="3">Isoform C is expressed in nurse cells. Isoform A is produced in the nurse cell but transported into the oocyte at stage 1, localizes to the oocyte cortex at stage 8 and to the anterior pole from day 9 onwards. Isoform B is expressed in the somatic follicle cells that surround the germline.</text>
</comment>
<comment type="developmental stage">
    <text>Oogenesis and early embryogenesis.</text>
</comment>
<comment type="miscellaneous">
    <text>'Hu-li tai shao' means 'too little nursing' in Chinese.</text>
</comment>
<comment type="similarity">
    <text evidence="9">Belongs to the aldolase class II family. Adducin subfamily.</text>
</comment>
<gene>
    <name type="primary">hts</name>
    <name type="ORF">CG9325</name>
</gene>
<accession>Q02645</accession>
<accession>A1ZBK8</accession>
<accession>A4UZP6</accession>
<accession>E1JGM4</accession>
<accession>E1JGM6</accession>
<accession>Q8MQX6</accession>
<accession>Q9GNA8</accession>
<accession>Q9GZC1</accession>
<accession>Q9V8U4</accession>
<accession>Q9V8U5</accession>
<name>HTS_DROME</name>
<protein>
    <recommendedName>
        <fullName>Protein hu-li tai shao</fullName>
    </recommendedName>
    <alternativeName>
        <fullName>Adducin-like protein</fullName>
    </alternativeName>
</protein>
<sequence length="1156" mass="127939">MTEVEQPPQNGIDPTAGEDDDNSKARPADIEQDMREMERRKRVEAIMGSKLFREELERIVDSARDGGAGASGILQQLSDIVGVPVSRVGSVFKSSNCMVPINDIRGVESMGYAKGEKILRCKLAATFRLLDLYGWTQGLGAQITARLKVDQEYFLVNPYGLLYHEITASALNKVDMQGQIVEQGTTNFGGNKSHFVLHSVVHAARPDIRCAIYIGCSPVVAISSLKTGLLPLTKDACVLGEITTHAYTGLFDEEERNRLVRSLGPNSKVILLTNHGALCCGETIEEAFFAACHIVQACETQLKLLPVGLDNLVLIPEESRKAIYEQSRRPPEDLEKKFAAVAAAEDGAATAEKDAAEAVPKVGSPPKWRVGGAEFEALMRMLDNAGYRTGYIYRHPLIKSDPPKPKNDVELPPAVSSLGYLLEEEELFRQGIWKKGDIRKGGDRSRWLNSPNVYQKVEVLETGTPDPKKITKWVAEGSPTHSTPVRIEDPLQFVPAGTNPREFKRVQQLIKDNRRADKISAGPQSHILEGVTWDEASRLKDATVSQAGDHVVMMGAASKGIIQRGFQHNATVYKAPYAKNPFDNVTDDELNEYKRTVERKKKSVHGEYTDTDFSESEAVLQAGTKKYPQSEPETEHQVIEIQTQQAPVPRQAEVVLSDALVSQLAQKYAFLYSPGQYMYACMKMAPLMHKVYVIHKVEPVSKHNYPPVNDGNMSIHHNESGAGFMAQESSVISSTPVRNALASVSLPEERNHSILGLSSTPYRTISHFGFNCPLITSPTILLHPEHRSIWQRVAEQREKVVSFIDLTTLSLDNRKLLNVVTSTHPTQCQSQSQSFISEKHIQLEVTPPKRKQRVYSATISSGLDDSLDELDSLMSGLAINMPRSREQDSGLYRSYTFLPSNHALPKDTDANNRDQTDRERPEAEQEESFHCAGDSGIGDSTGRRPRLATTSNDSSIQEAEAYTQGKHVKLTLSSSPTPTATQSPATIEILINVSLRNAECVQTVQTHEQEFRAKLERVIDEEIHYISQQLAFKQRQAELHEQQTTSRAPIATPSFTTMHPPAPASSSSMVHRSNSAPELCHTYSYVAVGDLSTKQDQASPQLPAEGEPLNDILSSLEKELERLLNSVVTAHMLHNKAIIHECRARFSQLADGIVSS</sequence>
<organism>
    <name type="scientific">Drosophila melanogaster</name>
    <name type="common">Fruit fly</name>
    <dbReference type="NCBI Taxonomy" id="7227"/>
    <lineage>
        <taxon>Eukaryota</taxon>
        <taxon>Metazoa</taxon>
        <taxon>Ecdysozoa</taxon>
        <taxon>Arthropoda</taxon>
        <taxon>Hexapoda</taxon>
        <taxon>Insecta</taxon>
        <taxon>Pterygota</taxon>
        <taxon>Neoptera</taxon>
        <taxon>Endopterygota</taxon>
        <taxon>Diptera</taxon>
        <taxon>Brachycera</taxon>
        <taxon>Muscomorpha</taxon>
        <taxon>Ephydroidea</taxon>
        <taxon>Drosophilidae</taxon>
        <taxon>Drosophila</taxon>
        <taxon>Sophophora</taxon>
    </lineage>
</organism>
<feature type="chain" id="PRO_0000218539" description="Protein hu-li tai shao">
    <location>
        <begin position="1"/>
        <end position="1156"/>
    </location>
</feature>
<feature type="region of interest" description="Disordered" evidence="2">
    <location>
        <begin position="1"/>
        <end position="36"/>
    </location>
</feature>
<feature type="region of interest" description="Disordered" evidence="2">
    <location>
        <begin position="897"/>
        <end position="956"/>
    </location>
</feature>
<feature type="compositionally biased region" description="Basic and acidic residues" evidence="2">
    <location>
        <begin position="22"/>
        <end position="36"/>
    </location>
</feature>
<feature type="compositionally biased region" description="Basic and acidic residues" evidence="2">
    <location>
        <begin position="904"/>
        <end position="929"/>
    </location>
</feature>
<feature type="modified residue" description="Phosphoserine" evidence="5">
    <location>
        <position position="478"/>
    </location>
</feature>
<feature type="modified residue" description="Phosphothreonine" evidence="5">
    <location>
        <position position="480"/>
    </location>
</feature>
<feature type="modified residue" description="Phosphothreonine" evidence="4">
    <location>
        <position position="498"/>
    </location>
</feature>
<feature type="modified residue" description="Phosphoserine" evidence="5">
    <location>
        <position position="603"/>
    </location>
</feature>
<feature type="modified residue" description="Phosphotyrosine" evidence="5">
    <location>
        <position position="608"/>
    </location>
</feature>
<feature type="modified residue" description="Phosphothreonine" evidence="5">
    <location>
        <position position="609"/>
    </location>
</feature>
<feature type="modified residue" description="Phosphothreonine" evidence="5">
    <location>
        <position position="611"/>
    </location>
</feature>
<feature type="modified residue" description="Phosphoserine" evidence="5">
    <location>
        <position position="614"/>
    </location>
</feature>
<feature type="modified residue" description="Phosphotyrosine" evidence="5">
    <location>
        <position position="627"/>
    </location>
</feature>
<feature type="modified residue" description="Phosphoserine" evidence="5">
    <location>
        <position position="630"/>
    </location>
</feature>
<feature type="splice variant" id="VSP_009199" description="In isoform C." evidence="7">
    <original>WVAEGSPTHSTPVRIEDPLQFVP</original>
    <variation>VEIITFEDMKQTKTTNLKEIEGK</variation>
    <location>
        <begin position="473"/>
        <end position="495"/>
    </location>
</feature>
<feature type="splice variant" id="VSP_009200" description="In isoform C." evidence="7">
    <location>
        <begin position="496"/>
        <end position="1156"/>
    </location>
</feature>
<feature type="splice variant" id="VSP_000191" description="In isoform B." evidence="7 8">
    <original>ALVSQLAQKYAFLYSPGQYMYACMKMAPLMHKVYVIHKVEPVSKHNYPPVNDGNMSIHHN</original>
    <variation>GENVQNGDHSEAHLSTFSQSSKEFQDVSTDGSPKKDKKKKKGLRTPSFLKKKKEKKKAEA</variation>
    <location>
        <begin position="659"/>
        <end position="718"/>
    </location>
</feature>
<feature type="splice variant" id="VSP_042122" description="In isoform D." evidence="9">
    <original>ALVSQLAQKY</original>
    <variation>GTNCCTAFIK</variation>
    <location>
        <begin position="659"/>
        <end position="668"/>
    </location>
</feature>
<feature type="splice variant" id="VSP_042123" description="In isoform D." evidence="9">
    <location>
        <begin position="669"/>
        <end position="1156"/>
    </location>
</feature>
<feature type="splice variant" id="VSP_000192" description="In isoform B." evidence="7 8">
    <location>
        <begin position="719"/>
        <end position="1156"/>
    </location>
</feature>
<feature type="sequence conflict" description="In Ref. 6; AAM52757." evidence="9" ref="6">
    <location>
        <position position="76"/>
    </location>
</feature>
<feature type="sequence conflict" description="In Ref. 1; AAA28643." evidence="9" ref="1">
    <original>A</original>
    <variation>V</variation>
    <location>
        <position position="351"/>
    </location>
</feature>
<feature type="sequence conflict" description="In Ref. 1; AAA28643." evidence="9" ref="1">
    <original>ACM</original>
    <variation>GCL</variation>
    <location>
        <begin position="680"/>
        <end position="682"/>
    </location>
</feature>
<feature type="sequence conflict" description="In Ref. 1; AAA28643 and 2; AAB59182." evidence="9" ref="1 2">
    <original>H</original>
    <variation>Q</variation>
    <location>
        <position position="689"/>
    </location>
</feature>
<feature type="sequence conflict" description="In Ref. 1; AAA28643." evidence="9" ref="1">
    <original>MAQ</original>
    <variation>LAH</variation>
    <location>
        <begin position="725"/>
        <end position="727"/>
    </location>
</feature>
<feature type="sequence conflict" description="In Ref. 1; AAA28643." evidence="9" ref="1">
    <original>L</original>
    <variation>F</variation>
    <location>
        <position position="746"/>
    </location>
</feature>
<feature type="sequence conflict" description="In Ref. 1; AAA28643." evidence="9" ref="1">
    <original>N</original>
    <variation>D</variation>
    <location>
        <position position="912"/>
    </location>
</feature>
<feature type="sequence conflict" description="In Ref. 2; AAB59182." evidence="9" ref="2">
    <original>G</original>
    <variation>C</variation>
    <location>
        <position position="1089"/>
    </location>
</feature>
<dbReference type="EMBL" id="L05016">
    <property type="protein sequence ID" value="AAA28643.1"/>
    <property type="molecule type" value="mRNA"/>
</dbReference>
<dbReference type="EMBL" id="AF151708">
    <property type="protein sequence ID" value="AAB59182.1"/>
    <property type="molecule type" value="mRNA"/>
</dbReference>
<dbReference type="EMBL" id="AF151705">
    <property type="protein sequence ID" value="AAG01377.1"/>
    <property type="molecule type" value="mRNA"/>
</dbReference>
<dbReference type="EMBL" id="AF151706">
    <property type="protein sequence ID" value="AAG01378.1"/>
    <property type="molecule type" value="mRNA"/>
</dbReference>
<dbReference type="EMBL" id="AF151707">
    <property type="protein sequence ID" value="AAG01379.1"/>
    <property type="molecule type" value="mRNA"/>
</dbReference>
<dbReference type="EMBL" id="AE013599">
    <property type="protein sequence ID" value="AAF57565.3"/>
    <property type="molecule type" value="Genomic_DNA"/>
</dbReference>
<dbReference type="EMBL" id="AE013599">
    <property type="protein sequence ID" value="AAF57566.4"/>
    <property type="molecule type" value="Genomic_DNA"/>
</dbReference>
<dbReference type="EMBL" id="AE013599">
    <property type="protein sequence ID" value="AAM70850.2"/>
    <property type="molecule type" value="Genomic_DNA"/>
</dbReference>
<dbReference type="EMBL" id="AE013599">
    <property type="protein sequence ID" value="AAM70851.2"/>
    <property type="molecule type" value="Genomic_DNA"/>
</dbReference>
<dbReference type="EMBL" id="AE013599">
    <property type="protein sequence ID" value="AAN16130.2"/>
    <property type="molecule type" value="Genomic_DNA"/>
</dbReference>
<dbReference type="EMBL" id="AE013599">
    <property type="protein sequence ID" value="AAN16131.2"/>
    <property type="molecule type" value="Genomic_DNA"/>
</dbReference>
<dbReference type="EMBL" id="AE013599">
    <property type="protein sequence ID" value="ACZ94475.1"/>
    <property type="molecule type" value="Genomic_DNA"/>
</dbReference>
<dbReference type="EMBL" id="AE013599">
    <property type="protein sequence ID" value="ACZ94476.1"/>
    <property type="molecule type" value="Genomic_DNA"/>
</dbReference>
<dbReference type="EMBL" id="AE013599">
    <property type="protein sequence ID" value="ACZ94477.1"/>
    <property type="molecule type" value="Genomic_DNA"/>
</dbReference>
<dbReference type="EMBL" id="AE013599">
    <property type="protein sequence ID" value="ACZ94478.1"/>
    <property type="molecule type" value="Genomic_DNA"/>
</dbReference>
<dbReference type="EMBL" id="AY122245">
    <property type="protein sequence ID" value="AAM52757.1"/>
    <property type="molecule type" value="mRNA"/>
</dbReference>
<dbReference type="PIR" id="A47397">
    <property type="entry name" value="A47397"/>
</dbReference>
<dbReference type="RefSeq" id="NP_001163203.1">
    <molecule id="Q02645-3"/>
    <property type="nucleotide sequence ID" value="NM_001169732.2"/>
</dbReference>
<dbReference type="RefSeq" id="NP_001163204.1">
    <molecule id="Q02645-3"/>
    <property type="nucleotide sequence ID" value="NM_001169733.2"/>
</dbReference>
<dbReference type="RefSeq" id="NP_001163205.1">
    <molecule id="Q02645-1"/>
    <property type="nucleotide sequence ID" value="NM_001169734.2"/>
</dbReference>
<dbReference type="RefSeq" id="NP_001163206.1">
    <molecule id="Q02645-1"/>
    <property type="nucleotide sequence ID" value="NM_001169735.2"/>
</dbReference>
<dbReference type="RefSeq" id="NP_476877.1">
    <molecule id="Q02645-1"/>
    <property type="nucleotide sequence ID" value="NM_057529.4"/>
</dbReference>
<dbReference type="RefSeq" id="NP_725886.2">
    <molecule id="Q02645-2"/>
    <property type="nucleotide sequence ID" value="NM_166347.3"/>
</dbReference>
<dbReference type="RefSeq" id="NP_725887.2">
    <molecule id="Q02645-2"/>
    <property type="nucleotide sequence ID" value="NM_166348.3"/>
</dbReference>
<dbReference type="RefSeq" id="NP_725888.2">
    <molecule id="Q02645-2"/>
    <property type="nucleotide sequence ID" value="NM_166349.3"/>
</dbReference>
<dbReference type="RefSeq" id="NP_725889.1">
    <molecule id="Q02645-4"/>
    <property type="nucleotide sequence ID" value="NM_166350.2"/>
</dbReference>
<dbReference type="RefSeq" id="NP_725890.1">
    <molecule id="Q02645-3"/>
    <property type="nucleotide sequence ID" value="NM_166351.2"/>
</dbReference>
<dbReference type="SMR" id="Q02645"/>
<dbReference type="BioGRID" id="62894">
    <property type="interactions" value="24"/>
</dbReference>
<dbReference type="DIP" id="DIP-23013N"/>
<dbReference type="FunCoup" id="Q02645">
    <property type="interactions" value="569"/>
</dbReference>
<dbReference type="IntAct" id="Q02645">
    <property type="interactions" value="28"/>
</dbReference>
<dbReference type="STRING" id="7227.FBpp0301121"/>
<dbReference type="GlyGen" id="Q02645">
    <property type="glycosylation" value="3 sites"/>
</dbReference>
<dbReference type="iPTMnet" id="Q02645"/>
<dbReference type="EnsemblMetazoa" id="FBtr0309102">
    <molecule id="Q02645-4"/>
    <property type="protein sequence ID" value="FBpp0301110"/>
    <property type="gene ID" value="FBgn0263391"/>
</dbReference>
<dbReference type="EnsemblMetazoa" id="FBtr0309103">
    <molecule id="Q02645-3"/>
    <property type="protein sequence ID" value="FBpp0301111"/>
    <property type="gene ID" value="FBgn0263391"/>
</dbReference>
<dbReference type="EnsemblMetazoa" id="FBtr0309104">
    <molecule id="Q02645-1"/>
    <property type="protein sequence ID" value="FBpp0301112"/>
    <property type="gene ID" value="FBgn0263391"/>
</dbReference>
<dbReference type="EnsemblMetazoa" id="FBtr0309105">
    <molecule id="Q02645-3"/>
    <property type="protein sequence ID" value="FBpp0301113"/>
    <property type="gene ID" value="FBgn0263391"/>
</dbReference>
<dbReference type="EnsemblMetazoa" id="FBtr0309106">
    <molecule id="Q02645-2"/>
    <property type="protein sequence ID" value="FBpp0301114"/>
    <property type="gene ID" value="FBgn0263391"/>
</dbReference>
<dbReference type="EnsemblMetazoa" id="FBtr0309107">
    <molecule id="Q02645-3"/>
    <property type="protein sequence ID" value="FBpp0301115"/>
    <property type="gene ID" value="FBgn0263391"/>
</dbReference>
<dbReference type="EnsemblMetazoa" id="FBtr0309108">
    <molecule id="Q02645-1"/>
    <property type="protein sequence ID" value="FBpp0301116"/>
    <property type="gene ID" value="FBgn0263391"/>
</dbReference>
<dbReference type="EnsemblMetazoa" id="FBtr0309109">
    <molecule id="Q02645-2"/>
    <property type="protein sequence ID" value="FBpp0301117"/>
    <property type="gene ID" value="FBgn0263391"/>
</dbReference>
<dbReference type="EnsemblMetazoa" id="FBtr0309110">
    <molecule id="Q02645-2"/>
    <property type="protein sequence ID" value="FBpp0301118"/>
    <property type="gene ID" value="FBgn0263391"/>
</dbReference>
<dbReference type="EnsemblMetazoa" id="FBtr0309111">
    <molecule id="Q02645-1"/>
    <property type="protein sequence ID" value="FBpp0301119"/>
    <property type="gene ID" value="FBgn0263391"/>
</dbReference>
<dbReference type="GeneID" id="37230"/>
<dbReference type="KEGG" id="dme:Dmel_CG43443"/>
<dbReference type="UCSC" id="CG9325-RD">
    <property type="organism name" value="d. melanogaster"/>
</dbReference>
<dbReference type="UCSC" id="CG9325-RE">
    <property type="organism name" value="d. melanogaster"/>
</dbReference>
<dbReference type="AGR" id="FB:FBgn0263391"/>
<dbReference type="CTD" id="116529"/>
<dbReference type="FlyBase" id="FBgn0263391">
    <property type="gene designation" value="hts"/>
</dbReference>
<dbReference type="VEuPathDB" id="VectorBase:FBgn0263391"/>
<dbReference type="GeneTree" id="ENSGT00940000168292"/>
<dbReference type="InParanoid" id="Q02645"/>
<dbReference type="OrthoDB" id="3238794at2759"/>
<dbReference type="PhylomeDB" id="Q02645"/>
<dbReference type="Reactome" id="R-DME-264870">
    <property type="pathway name" value="Caspase-mediated cleavage of cytoskeletal proteins"/>
</dbReference>
<dbReference type="Reactome" id="R-DME-5223345">
    <property type="pathway name" value="Miscellaneous transport and binding events"/>
</dbReference>
<dbReference type="Reactome" id="R-DME-9013405">
    <property type="pathway name" value="RHOD GTPase cycle"/>
</dbReference>
<dbReference type="Reactome" id="R-DME-9035034">
    <property type="pathway name" value="RHOF GTPase cycle"/>
</dbReference>
<dbReference type="SignaLink" id="Q02645"/>
<dbReference type="BioGRID-ORCS" id="37230">
    <property type="hits" value="0 hits in 3 CRISPR screens"/>
</dbReference>
<dbReference type="GenomeRNAi" id="37230"/>
<dbReference type="PRO" id="PR:Q02645"/>
<dbReference type="Proteomes" id="UP000000803">
    <property type="component" value="Chromosome 2R"/>
</dbReference>
<dbReference type="Bgee" id="FBgn0263391">
    <property type="expression patterns" value="Expressed in spermatogonium in testis and 284 other cell types or tissues"/>
</dbReference>
<dbReference type="ExpressionAtlas" id="Q02645">
    <property type="expression patterns" value="baseline and differential"/>
</dbReference>
<dbReference type="GO" id="GO:0005737">
    <property type="term" value="C:cytoplasm"/>
    <property type="evidence" value="ECO:0000314"/>
    <property type="project" value="FlyBase"/>
</dbReference>
<dbReference type="GO" id="GO:0005856">
    <property type="term" value="C:cytoskeleton"/>
    <property type="evidence" value="ECO:0000318"/>
    <property type="project" value="GO_Central"/>
</dbReference>
<dbReference type="GO" id="GO:0035183">
    <property type="term" value="C:female germline ring canal inner rim"/>
    <property type="evidence" value="ECO:0000304"/>
    <property type="project" value="FlyBase"/>
</dbReference>
<dbReference type="GO" id="GO:0045169">
    <property type="term" value="C:fusome"/>
    <property type="evidence" value="ECO:0000314"/>
    <property type="project" value="FlyBase"/>
</dbReference>
<dbReference type="GO" id="GO:0045172">
    <property type="term" value="C:germline ring canal"/>
    <property type="evidence" value="ECO:0000314"/>
    <property type="project" value="FlyBase"/>
</dbReference>
<dbReference type="GO" id="GO:0016328">
    <property type="term" value="C:lateral plasma membrane"/>
    <property type="evidence" value="ECO:0007005"/>
    <property type="project" value="FlyBase"/>
</dbReference>
<dbReference type="GO" id="GO:0005886">
    <property type="term" value="C:plasma membrane"/>
    <property type="evidence" value="ECO:0000314"/>
    <property type="project" value="FlyBase"/>
</dbReference>
<dbReference type="GO" id="GO:0098794">
    <property type="term" value="C:postsynapse"/>
    <property type="evidence" value="ECO:0000314"/>
    <property type="project" value="SynGO"/>
</dbReference>
<dbReference type="GO" id="GO:0014069">
    <property type="term" value="C:postsynaptic density"/>
    <property type="evidence" value="ECO:0000318"/>
    <property type="project" value="GO_Central"/>
</dbReference>
<dbReference type="GO" id="GO:0098793">
    <property type="term" value="C:presynapse"/>
    <property type="evidence" value="ECO:0000314"/>
    <property type="project" value="SynGO"/>
</dbReference>
<dbReference type="GO" id="GO:0045170">
    <property type="term" value="C:spectrosome"/>
    <property type="evidence" value="ECO:0000314"/>
    <property type="project" value="FlyBase"/>
</dbReference>
<dbReference type="GO" id="GO:0051015">
    <property type="term" value="F:actin filament binding"/>
    <property type="evidence" value="ECO:0000318"/>
    <property type="project" value="GO_Central"/>
</dbReference>
<dbReference type="GO" id="GO:0061572">
    <property type="term" value="P:actin filament bundle organization"/>
    <property type="evidence" value="ECO:0000315"/>
    <property type="project" value="FlyBase"/>
</dbReference>
<dbReference type="GO" id="GO:0007527">
    <property type="term" value="P:adult somatic muscle development"/>
    <property type="evidence" value="ECO:0000315"/>
    <property type="project" value="FlyBase"/>
</dbReference>
<dbReference type="GO" id="GO:0007411">
    <property type="term" value="P:axon guidance"/>
    <property type="evidence" value="ECO:0000315"/>
    <property type="project" value="FlyBase"/>
</dbReference>
<dbReference type="GO" id="GO:0007098">
    <property type="term" value="P:centrosome cycle"/>
    <property type="evidence" value="ECO:0000315"/>
    <property type="project" value="FlyBase"/>
</dbReference>
<dbReference type="GO" id="GO:0007282">
    <property type="term" value="P:cystoblast division"/>
    <property type="evidence" value="ECO:0000315"/>
    <property type="project" value="FlyBase"/>
</dbReference>
<dbReference type="GO" id="GO:0048135">
    <property type="term" value="P:female germ-line cyst formation"/>
    <property type="evidence" value="ECO:0000304"/>
    <property type="project" value="FlyBase"/>
</dbReference>
<dbReference type="GO" id="GO:0008302">
    <property type="term" value="P:female germline ring canal formation, actin assembly"/>
    <property type="evidence" value="ECO:0000315"/>
    <property type="project" value="FlyBase"/>
</dbReference>
<dbReference type="GO" id="GO:0045478">
    <property type="term" value="P:fusome organization"/>
    <property type="evidence" value="ECO:0000304"/>
    <property type="project" value="FlyBase"/>
</dbReference>
<dbReference type="GO" id="GO:0048134">
    <property type="term" value="P:germ-line cyst formation"/>
    <property type="evidence" value="ECO:0000304"/>
    <property type="project" value="FlyBase"/>
</dbReference>
<dbReference type="GO" id="GO:0007294">
    <property type="term" value="P:germarium-derived oocyte fate determination"/>
    <property type="evidence" value="ECO:0000304"/>
    <property type="project" value="FlyBase"/>
</dbReference>
<dbReference type="GO" id="GO:0000212">
    <property type="term" value="P:meiotic spindle organization"/>
    <property type="evidence" value="ECO:0000315"/>
    <property type="project" value="FlyBase"/>
</dbReference>
<dbReference type="GO" id="GO:0048477">
    <property type="term" value="P:oogenesis"/>
    <property type="evidence" value="ECO:0000315"/>
    <property type="project" value="FlyBase"/>
</dbReference>
<dbReference type="GO" id="GO:0030723">
    <property type="term" value="P:ovarian fusome organization"/>
    <property type="evidence" value="ECO:0000315"/>
    <property type="project" value="FlyBase"/>
</dbReference>
<dbReference type="GO" id="GO:0072499">
    <property type="term" value="P:photoreceptor cell axon guidance"/>
    <property type="evidence" value="ECO:0000315"/>
    <property type="project" value="FlyBase"/>
</dbReference>
<dbReference type="GO" id="GO:0099173">
    <property type="term" value="P:postsynapse organization"/>
    <property type="evidence" value="ECO:0000315"/>
    <property type="project" value="FlyBase"/>
</dbReference>
<dbReference type="GO" id="GO:0045214">
    <property type="term" value="P:sarcomere organization"/>
    <property type="evidence" value="ECO:0000315"/>
    <property type="project" value="FlyBase"/>
</dbReference>
<dbReference type="GO" id="GO:0030724">
    <property type="term" value="P:testicular fusome organization"/>
    <property type="evidence" value="ECO:0000315"/>
    <property type="project" value="FlyBase"/>
</dbReference>
<dbReference type="CDD" id="cd00398">
    <property type="entry name" value="Aldolase_II"/>
    <property type="match status" value="1"/>
</dbReference>
<dbReference type="FunFam" id="3.40.225.10:FF:000011">
    <property type="entry name" value="Uncharacterized protein, isoform B"/>
    <property type="match status" value="1"/>
</dbReference>
<dbReference type="Gene3D" id="3.40.225.10">
    <property type="entry name" value="Class II aldolase/adducin N-terminal domain"/>
    <property type="match status" value="1"/>
</dbReference>
<dbReference type="InterPro" id="IPR051017">
    <property type="entry name" value="Aldolase-II_Adducin_sf"/>
</dbReference>
<dbReference type="InterPro" id="IPR001303">
    <property type="entry name" value="Aldolase_II/adducin_N"/>
</dbReference>
<dbReference type="InterPro" id="IPR036409">
    <property type="entry name" value="Aldolase_II/adducin_N_sf"/>
</dbReference>
<dbReference type="PANTHER" id="PTHR10672">
    <property type="entry name" value="ADDUCIN"/>
    <property type="match status" value="1"/>
</dbReference>
<dbReference type="PANTHER" id="PTHR10672:SF3">
    <property type="entry name" value="PROTEIN HU-LI TAI SHAO"/>
    <property type="match status" value="1"/>
</dbReference>
<dbReference type="Pfam" id="PF00596">
    <property type="entry name" value="Aldolase_II"/>
    <property type="match status" value="1"/>
</dbReference>
<dbReference type="SMART" id="SM01007">
    <property type="entry name" value="Aldolase_II"/>
    <property type="match status" value="1"/>
</dbReference>
<dbReference type="SUPFAM" id="SSF53639">
    <property type="entry name" value="AraD/HMP-PK domain-like"/>
    <property type="match status" value="1"/>
</dbReference>
<evidence type="ECO:0000250" key="1"/>
<evidence type="ECO:0000256" key="2">
    <source>
        <dbReference type="SAM" id="MobiDB-lite"/>
    </source>
</evidence>
<evidence type="ECO:0000269" key="3">
    <source>
    </source>
</evidence>
<evidence type="ECO:0000269" key="4">
    <source>
    </source>
</evidence>
<evidence type="ECO:0000269" key="5">
    <source>
    </source>
</evidence>
<evidence type="ECO:0000269" key="6">
    <source>
    </source>
</evidence>
<evidence type="ECO:0000303" key="7">
    <source>
    </source>
</evidence>
<evidence type="ECO:0000303" key="8">
    <source>
    </source>
</evidence>
<evidence type="ECO:0000305" key="9"/>
<proteinExistence type="evidence at protein level"/>
<keyword id="KW-0009">Actin-binding</keyword>
<keyword id="KW-0025">Alternative splicing</keyword>
<keyword id="KW-1003">Cell membrane</keyword>
<keyword id="KW-0963">Cytoplasm</keyword>
<keyword id="KW-0206">Cytoskeleton</keyword>
<keyword id="KW-0217">Developmental protein</keyword>
<keyword id="KW-0221">Differentiation</keyword>
<keyword id="KW-0472">Membrane</keyword>
<keyword id="KW-0896">Oogenesis</keyword>
<keyword id="KW-0597">Phosphoprotein</keyword>
<keyword id="KW-1185">Reference proteome</keyword>
<reference key="1">
    <citation type="journal article" date="1992" name="Genes Dev.">
        <title>hu-li tai shao, a gene required for ring canal formation during Drosophila oogenesis, encodes a homolog of adducin.</title>
        <authorList>
            <person name="Yue L."/>
            <person name="Spradling A.C."/>
        </authorList>
    </citation>
    <scope>NUCLEOTIDE SEQUENCE [MRNA] (ISOFORM A)</scope>
    <source>
        <tissue>Egg</tissue>
    </source>
</reference>
<reference key="2">
    <citation type="journal article" date="1993" name="Proc. Natl. Acad. Sci. U.S.A.">
        <title>Different genetic requirements for anterior RNA localization revealed by the distribution of Adducin-like transcripts during Drosophila oogenesis.</title>
        <authorList>
            <person name="Ding D."/>
            <person name="Parkhurst S.M."/>
            <person name="Lipshitz H.D."/>
        </authorList>
    </citation>
    <scope>NUCLEOTIDE SEQUENCE [MRNA] (ISOFORM A)</scope>
    <source>
        <tissue>Embryo</tissue>
    </source>
</reference>
<reference key="3">
    <citation type="journal article" date="1999" name="J. Cell Sci.">
        <title>Different 3' untranslated regions target alternatively processed hu-li tai shao (hts) transcripts to distinct cytoplasmic locations during Drosophila oogenesis.</title>
        <authorList>
            <person name="Whittaker K.L."/>
            <person name="Ding D."/>
            <person name="Fisher W.W."/>
            <person name="Lipshitz H.D."/>
        </authorList>
    </citation>
    <scope>NUCLEOTIDE SEQUENCE [MRNA] (ISOFORMS A; B AND C)</scope>
    <scope>TISSUE SPECIFICITY</scope>
    <source>
        <tissue>Embryo</tissue>
        <tissue>Ovary</tissue>
    </source>
</reference>
<reference key="4">
    <citation type="journal article" date="2000" name="Science">
        <title>The genome sequence of Drosophila melanogaster.</title>
        <authorList>
            <person name="Adams M.D."/>
            <person name="Celniker S.E."/>
            <person name="Holt R.A."/>
            <person name="Evans C.A."/>
            <person name="Gocayne J.D."/>
            <person name="Amanatides P.G."/>
            <person name="Scherer S.E."/>
            <person name="Li P.W."/>
            <person name="Hoskins R.A."/>
            <person name="Galle R.F."/>
            <person name="George R.A."/>
            <person name="Lewis S.E."/>
            <person name="Richards S."/>
            <person name="Ashburner M."/>
            <person name="Henderson S.N."/>
            <person name="Sutton G.G."/>
            <person name="Wortman J.R."/>
            <person name="Yandell M.D."/>
            <person name="Zhang Q."/>
            <person name="Chen L.X."/>
            <person name="Brandon R.C."/>
            <person name="Rogers Y.-H.C."/>
            <person name="Blazej R.G."/>
            <person name="Champe M."/>
            <person name="Pfeiffer B.D."/>
            <person name="Wan K.H."/>
            <person name="Doyle C."/>
            <person name="Baxter E.G."/>
            <person name="Helt G."/>
            <person name="Nelson C.R."/>
            <person name="Miklos G.L.G."/>
            <person name="Abril J.F."/>
            <person name="Agbayani A."/>
            <person name="An H.-J."/>
            <person name="Andrews-Pfannkoch C."/>
            <person name="Baldwin D."/>
            <person name="Ballew R.M."/>
            <person name="Basu A."/>
            <person name="Baxendale J."/>
            <person name="Bayraktaroglu L."/>
            <person name="Beasley E.M."/>
            <person name="Beeson K.Y."/>
            <person name="Benos P.V."/>
            <person name="Berman B.P."/>
            <person name="Bhandari D."/>
            <person name="Bolshakov S."/>
            <person name="Borkova D."/>
            <person name="Botchan M.R."/>
            <person name="Bouck J."/>
            <person name="Brokstein P."/>
            <person name="Brottier P."/>
            <person name="Burtis K.C."/>
            <person name="Busam D.A."/>
            <person name="Butler H."/>
            <person name="Cadieu E."/>
            <person name="Center A."/>
            <person name="Chandra I."/>
            <person name="Cherry J.M."/>
            <person name="Cawley S."/>
            <person name="Dahlke C."/>
            <person name="Davenport L.B."/>
            <person name="Davies P."/>
            <person name="de Pablos B."/>
            <person name="Delcher A."/>
            <person name="Deng Z."/>
            <person name="Mays A.D."/>
            <person name="Dew I."/>
            <person name="Dietz S.M."/>
            <person name="Dodson K."/>
            <person name="Doup L.E."/>
            <person name="Downes M."/>
            <person name="Dugan-Rocha S."/>
            <person name="Dunkov B.C."/>
            <person name="Dunn P."/>
            <person name="Durbin K.J."/>
            <person name="Evangelista C.C."/>
            <person name="Ferraz C."/>
            <person name="Ferriera S."/>
            <person name="Fleischmann W."/>
            <person name="Fosler C."/>
            <person name="Gabrielian A.E."/>
            <person name="Garg N.S."/>
            <person name="Gelbart W.M."/>
            <person name="Glasser K."/>
            <person name="Glodek A."/>
            <person name="Gong F."/>
            <person name="Gorrell J.H."/>
            <person name="Gu Z."/>
            <person name="Guan P."/>
            <person name="Harris M."/>
            <person name="Harris N.L."/>
            <person name="Harvey D.A."/>
            <person name="Heiman T.J."/>
            <person name="Hernandez J.R."/>
            <person name="Houck J."/>
            <person name="Hostin D."/>
            <person name="Houston K.A."/>
            <person name="Howland T.J."/>
            <person name="Wei M.-H."/>
            <person name="Ibegwam C."/>
            <person name="Jalali M."/>
            <person name="Kalush F."/>
            <person name="Karpen G.H."/>
            <person name="Ke Z."/>
            <person name="Kennison J.A."/>
            <person name="Ketchum K.A."/>
            <person name="Kimmel B.E."/>
            <person name="Kodira C.D."/>
            <person name="Kraft C.L."/>
            <person name="Kravitz S."/>
            <person name="Kulp D."/>
            <person name="Lai Z."/>
            <person name="Lasko P."/>
            <person name="Lei Y."/>
            <person name="Levitsky A.A."/>
            <person name="Li J.H."/>
            <person name="Li Z."/>
            <person name="Liang Y."/>
            <person name="Lin X."/>
            <person name="Liu X."/>
            <person name="Mattei B."/>
            <person name="McIntosh T.C."/>
            <person name="McLeod M.P."/>
            <person name="McPherson D."/>
            <person name="Merkulov G."/>
            <person name="Milshina N.V."/>
            <person name="Mobarry C."/>
            <person name="Morris J."/>
            <person name="Moshrefi A."/>
            <person name="Mount S.M."/>
            <person name="Moy M."/>
            <person name="Murphy B."/>
            <person name="Murphy L."/>
            <person name="Muzny D.M."/>
            <person name="Nelson D.L."/>
            <person name="Nelson D.R."/>
            <person name="Nelson K.A."/>
            <person name="Nixon K."/>
            <person name="Nusskern D.R."/>
            <person name="Pacleb J.M."/>
            <person name="Palazzolo M."/>
            <person name="Pittman G.S."/>
            <person name="Pan S."/>
            <person name="Pollard J."/>
            <person name="Puri V."/>
            <person name="Reese M.G."/>
            <person name="Reinert K."/>
            <person name="Remington K."/>
            <person name="Saunders R.D.C."/>
            <person name="Scheeler F."/>
            <person name="Shen H."/>
            <person name="Shue B.C."/>
            <person name="Siden-Kiamos I."/>
            <person name="Simpson M."/>
            <person name="Skupski M.P."/>
            <person name="Smith T.J."/>
            <person name="Spier E."/>
            <person name="Spradling A.C."/>
            <person name="Stapleton M."/>
            <person name="Strong R."/>
            <person name="Sun E."/>
            <person name="Svirskas R."/>
            <person name="Tector C."/>
            <person name="Turner R."/>
            <person name="Venter E."/>
            <person name="Wang A.H."/>
            <person name="Wang X."/>
            <person name="Wang Z.-Y."/>
            <person name="Wassarman D.A."/>
            <person name="Weinstock G.M."/>
            <person name="Weissenbach J."/>
            <person name="Williams S.M."/>
            <person name="Woodage T."/>
            <person name="Worley K.C."/>
            <person name="Wu D."/>
            <person name="Yang S."/>
            <person name="Yao Q.A."/>
            <person name="Ye J."/>
            <person name="Yeh R.-F."/>
            <person name="Zaveri J.S."/>
            <person name="Zhan M."/>
            <person name="Zhang G."/>
            <person name="Zhao Q."/>
            <person name="Zheng L."/>
            <person name="Zheng X.H."/>
            <person name="Zhong F.N."/>
            <person name="Zhong W."/>
            <person name="Zhou X."/>
            <person name="Zhu S.C."/>
            <person name="Zhu X."/>
            <person name="Smith H.O."/>
            <person name="Gibbs R.A."/>
            <person name="Myers E.W."/>
            <person name="Rubin G.M."/>
            <person name="Venter J.C."/>
        </authorList>
    </citation>
    <scope>NUCLEOTIDE SEQUENCE [LARGE SCALE GENOMIC DNA]</scope>
    <source>
        <strain>Berkeley</strain>
    </source>
</reference>
<reference key="5">
    <citation type="journal article" date="2002" name="Genome Biol.">
        <title>Annotation of the Drosophila melanogaster euchromatic genome: a systematic review.</title>
        <authorList>
            <person name="Misra S."/>
            <person name="Crosby M.A."/>
            <person name="Mungall C.J."/>
            <person name="Matthews B.B."/>
            <person name="Campbell K.S."/>
            <person name="Hradecky P."/>
            <person name="Huang Y."/>
            <person name="Kaminker J.S."/>
            <person name="Millburn G.H."/>
            <person name="Prochnik S.E."/>
            <person name="Smith C.D."/>
            <person name="Tupy J.L."/>
            <person name="Whitfield E.J."/>
            <person name="Bayraktaroglu L."/>
            <person name="Berman B.P."/>
            <person name="Bettencourt B.R."/>
            <person name="Celniker S.E."/>
            <person name="de Grey A.D.N.J."/>
            <person name="Drysdale R.A."/>
            <person name="Harris N.L."/>
            <person name="Richter J."/>
            <person name="Russo S."/>
            <person name="Schroeder A.J."/>
            <person name="Shu S.Q."/>
            <person name="Stapleton M."/>
            <person name="Yamada C."/>
            <person name="Ashburner M."/>
            <person name="Gelbart W.M."/>
            <person name="Rubin G.M."/>
            <person name="Lewis S.E."/>
        </authorList>
    </citation>
    <scope>GENOME REANNOTATION</scope>
    <scope>ALTERNATIVE SPLICING</scope>
    <source>
        <strain>Berkeley</strain>
    </source>
</reference>
<reference key="6">
    <citation type="journal article" date="2002" name="Genome Biol.">
        <title>A Drosophila full-length cDNA resource.</title>
        <authorList>
            <person name="Stapleton M."/>
            <person name="Carlson J.W."/>
            <person name="Brokstein P."/>
            <person name="Yu C."/>
            <person name="Champe M."/>
            <person name="George R.A."/>
            <person name="Guarin H."/>
            <person name="Kronmiller B."/>
            <person name="Pacleb J.M."/>
            <person name="Park S."/>
            <person name="Wan K.H."/>
            <person name="Rubin G.M."/>
            <person name="Celniker S.E."/>
        </authorList>
    </citation>
    <scope>NUCLEOTIDE SEQUENCE [LARGE SCALE MRNA] (ISOFORM B)</scope>
    <source>
        <strain>Berkeley</strain>
        <tissue>Embryo</tissue>
    </source>
</reference>
<reference key="7">
    <citation type="journal article" date="2007" name="Mol. Biosyst.">
        <title>An integrated chemical, mass spectrometric and computational strategy for (quantitative) phosphoproteomics: application to Drosophila melanogaster Kc167 cells.</title>
        <authorList>
            <person name="Bodenmiller B."/>
            <person name="Mueller L.N."/>
            <person name="Pedrioli P.G.A."/>
            <person name="Pflieger D."/>
            <person name="Juenger M.A."/>
            <person name="Eng J.K."/>
            <person name="Aebersold R."/>
            <person name="Tao W.A."/>
        </authorList>
    </citation>
    <scope>PHOSPHORYLATION [LARGE SCALE ANALYSIS] AT THR-498</scope>
    <scope>IDENTIFICATION BY MASS SPECTROMETRY</scope>
</reference>
<reference key="8">
    <citation type="journal article" date="2008" name="J. Proteome Res.">
        <title>Phosphoproteome analysis of Drosophila melanogaster embryos.</title>
        <authorList>
            <person name="Zhai B."/>
            <person name="Villen J."/>
            <person name="Beausoleil S.A."/>
            <person name="Mintseris J."/>
            <person name="Gygi S.P."/>
        </authorList>
    </citation>
    <scope>PHOSPHORYLATION [LARGE SCALE ANALYSIS] AT SER-478; THR-480; SER-603; TYR-608; THR-609; THR-611; SER-614; TYR-627 AND SER-630</scope>
    <scope>IDENTIFICATION BY MASS SPECTROMETRY</scope>
    <source>
        <tissue>Embryo</tissue>
    </source>
</reference>
<reference key="9">
    <citation type="journal article" date="2013" name="Ann. Neurol.">
        <title>Mutations in gamma adducin are associated with inherited cerebral palsy.</title>
        <authorList>
            <person name="Kruer M.C."/>
            <person name="Jepperson T."/>
            <person name="Dutta S."/>
            <person name="Steiner R.D."/>
            <person name="Cottenie E."/>
            <person name="Sanford L."/>
            <person name="Merkens M."/>
            <person name="Russman B.S."/>
            <person name="Blasco P.A."/>
            <person name="Fan G."/>
            <person name="Pollock J."/>
            <person name="Green S."/>
            <person name="Woltjer R.L."/>
            <person name="Mooney C."/>
            <person name="Kretzschmar D."/>
            <person name="Paisan-Ruiz C."/>
            <person name="Houlden H."/>
        </authorList>
    </citation>
    <scope>FUNCTION</scope>
</reference>